<proteinExistence type="evidence at protein level"/>
<protein>
    <recommendedName>
        <fullName>F-box only protein 36</fullName>
    </recommendedName>
</protein>
<sequence length="188" mass="22105">MASWLPETLFETVGQGPPPSKDYYQLLVTRSQVIFRWWKISLRSEYRSTKPGEAKETHEDFLENSHLQGQTALIFGARILDYVINLCKGKFDFLERLSDDLLLTIISYLDLEDIARLCQTSHRFAKLCMSDKLWEQIVQSTCDTITPDVRALAEDTGWRQLFFTNKLQLQRQLRKRKQKYGNLREKQP</sequence>
<gene>
    <name type="primary">FBXO36</name>
    <name type="synonym">FBX36</name>
</gene>
<accession>Q8NEA4</accession>
<accession>B3KVQ6</accession>
<accession>Q53TE6</accession>
<accession>Q8WWD4</accession>
<evidence type="ECO:0000250" key="1"/>
<evidence type="ECO:0000255" key="2">
    <source>
        <dbReference type="PROSITE-ProRule" id="PRU00080"/>
    </source>
</evidence>
<evidence type="ECO:0000269" key="3">
    <source>
    </source>
</evidence>
<evidence type="ECO:0000303" key="4">
    <source>
    </source>
</evidence>
<feature type="chain" id="PRO_0000119928" description="F-box only protein 36">
    <location>
        <begin position="1"/>
        <end position="188"/>
    </location>
</feature>
<feature type="domain" description="F-box" evidence="2">
    <location>
        <begin position="91"/>
        <end position="137"/>
    </location>
</feature>
<feature type="splice variant" id="VSP_054336" description="In isoform 2." evidence="4">
    <original>MASWLPETLFETVGQGPPPSKDYYQLLVTRSQ</original>
    <variation>M</variation>
    <location>
        <begin position="1"/>
        <end position="32"/>
    </location>
</feature>
<feature type="sequence variant" id="VAR_045626" description="In dbSNP:rs1035834." evidence="3">
    <original>L</original>
    <variation>F</variation>
    <location>
        <position position="86"/>
    </location>
</feature>
<reference key="1">
    <citation type="journal article" date="2004" name="Nat. Genet.">
        <title>Complete sequencing and characterization of 21,243 full-length human cDNAs.</title>
        <authorList>
            <person name="Ota T."/>
            <person name="Suzuki Y."/>
            <person name="Nishikawa T."/>
            <person name="Otsuki T."/>
            <person name="Sugiyama T."/>
            <person name="Irie R."/>
            <person name="Wakamatsu A."/>
            <person name="Hayashi K."/>
            <person name="Sato H."/>
            <person name="Nagai K."/>
            <person name="Kimura K."/>
            <person name="Makita H."/>
            <person name="Sekine M."/>
            <person name="Obayashi M."/>
            <person name="Nishi T."/>
            <person name="Shibahara T."/>
            <person name="Tanaka T."/>
            <person name="Ishii S."/>
            <person name="Yamamoto J."/>
            <person name="Saito K."/>
            <person name="Kawai Y."/>
            <person name="Isono Y."/>
            <person name="Nakamura Y."/>
            <person name="Nagahari K."/>
            <person name="Murakami K."/>
            <person name="Yasuda T."/>
            <person name="Iwayanagi T."/>
            <person name="Wagatsuma M."/>
            <person name="Shiratori A."/>
            <person name="Sudo H."/>
            <person name="Hosoiri T."/>
            <person name="Kaku Y."/>
            <person name="Kodaira H."/>
            <person name="Kondo H."/>
            <person name="Sugawara M."/>
            <person name="Takahashi M."/>
            <person name="Kanda K."/>
            <person name="Yokoi T."/>
            <person name="Furuya T."/>
            <person name="Kikkawa E."/>
            <person name="Omura Y."/>
            <person name="Abe K."/>
            <person name="Kamihara K."/>
            <person name="Katsuta N."/>
            <person name="Sato K."/>
            <person name="Tanikawa M."/>
            <person name="Yamazaki M."/>
            <person name="Ninomiya K."/>
            <person name="Ishibashi T."/>
            <person name="Yamashita H."/>
            <person name="Murakawa K."/>
            <person name="Fujimori K."/>
            <person name="Tanai H."/>
            <person name="Kimata M."/>
            <person name="Watanabe M."/>
            <person name="Hiraoka S."/>
            <person name="Chiba Y."/>
            <person name="Ishida S."/>
            <person name="Ono Y."/>
            <person name="Takiguchi S."/>
            <person name="Watanabe S."/>
            <person name="Yosida M."/>
            <person name="Hotuta T."/>
            <person name="Kusano J."/>
            <person name="Kanehori K."/>
            <person name="Takahashi-Fujii A."/>
            <person name="Hara H."/>
            <person name="Tanase T.-O."/>
            <person name="Nomura Y."/>
            <person name="Togiya S."/>
            <person name="Komai F."/>
            <person name="Hara R."/>
            <person name="Takeuchi K."/>
            <person name="Arita M."/>
            <person name="Imose N."/>
            <person name="Musashino K."/>
            <person name="Yuuki H."/>
            <person name="Oshima A."/>
            <person name="Sasaki N."/>
            <person name="Aotsuka S."/>
            <person name="Yoshikawa Y."/>
            <person name="Matsunawa H."/>
            <person name="Ichihara T."/>
            <person name="Shiohata N."/>
            <person name="Sano S."/>
            <person name="Moriya S."/>
            <person name="Momiyama H."/>
            <person name="Satoh N."/>
            <person name="Takami S."/>
            <person name="Terashima Y."/>
            <person name="Suzuki O."/>
            <person name="Nakagawa S."/>
            <person name="Senoh A."/>
            <person name="Mizoguchi H."/>
            <person name="Goto Y."/>
            <person name="Shimizu F."/>
            <person name="Wakebe H."/>
            <person name="Hishigaki H."/>
            <person name="Watanabe T."/>
            <person name="Sugiyama A."/>
            <person name="Takemoto M."/>
            <person name="Kawakami B."/>
            <person name="Yamazaki M."/>
            <person name="Watanabe K."/>
            <person name="Kumagai A."/>
            <person name="Itakura S."/>
            <person name="Fukuzumi Y."/>
            <person name="Fujimori Y."/>
            <person name="Komiyama M."/>
            <person name="Tashiro H."/>
            <person name="Tanigami A."/>
            <person name="Fujiwara T."/>
            <person name="Ono T."/>
            <person name="Yamada K."/>
            <person name="Fujii Y."/>
            <person name="Ozaki K."/>
            <person name="Hirao M."/>
            <person name="Ohmori Y."/>
            <person name="Kawabata A."/>
            <person name="Hikiji T."/>
            <person name="Kobatake N."/>
            <person name="Inagaki H."/>
            <person name="Ikema Y."/>
            <person name="Okamoto S."/>
            <person name="Okitani R."/>
            <person name="Kawakami T."/>
            <person name="Noguchi S."/>
            <person name="Itoh T."/>
            <person name="Shigeta K."/>
            <person name="Senba T."/>
            <person name="Matsumura K."/>
            <person name="Nakajima Y."/>
            <person name="Mizuno T."/>
            <person name="Morinaga M."/>
            <person name="Sasaki M."/>
            <person name="Togashi T."/>
            <person name="Oyama M."/>
            <person name="Hata H."/>
            <person name="Watanabe M."/>
            <person name="Komatsu T."/>
            <person name="Mizushima-Sugano J."/>
            <person name="Satoh T."/>
            <person name="Shirai Y."/>
            <person name="Takahashi Y."/>
            <person name="Nakagawa K."/>
            <person name="Okumura K."/>
            <person name="Nagase T."/>
            <person name="Nomura N."/>
            <person name="Kikuchi H."/>
            <person name="Masuho Y."/>
            <person name="Yamashita R."/>
            <person name="Nakai K."/>
            <person name="Yada T."/>
            <person name="Nakamura Y."/>
            <person name="Ohara O."/>
            <person name="Isogai T."/>
            <person name="Sugano S."/>
        </authorList>
    </citation>
    <scope>NUCLEOTIDE SEQUENCE [LARGE SCALE MRNA] (ISOFORMS 1 AND 2)</scope>
    <source>
        <tissue>Amygdala</tissue>
    </source>
</reference>
<reference key="2">
    <citation type="journal article" date="2005" name="Nature">
        <title>Generation and annotation of the DNA sequences of human chromosomes 2 and 4.</title>
        <authorList>
            <person name="Hillier L.W."/>
            <person name="Graves T.A."/>
            <person name="Fulton R.S."/>
            <person name="Fulton L.A."/>
            <person name="Pepin K.H."/>
            <person name="Minx P."/>
            <person name="Wagner-McPherson C."/>
            <person name="Layman D."/>
            <person name="Wylie K."/>
            <person name="Sekhon M."/>
            <person name="Becker M.C."/>
            <person name="Fewell G.A."/>
            <person name="Delehaunty K.D."/>
            <person name="Miner T.L."/>
            <person name="Nash W.E."/>
            <person name="Kremitzki C."/>
            <person name="Oddy L."/>
            <person name="Du H."/>
            <person name="Sun H."/>
            <person name="Bradshaw-Cordum H."/>
            <person name="Ali J."/>
            <person name="Carter J."/>
            <person name="Cordes M."/>
            <person name="Harris A."/>
            <person name="Isak A."/>
            <person name="van Brunt A."/>
            <person name="Nguyen C."/>
            <person name="Du F."/>
            <person name="Courtney L."/>
            <person name="Kalicki J."/>
            <person name="Ozersky P."/>
            <person name="Abbott S."/>
            <person name="Armstrong J."/>
            <person name="Belter E.A."/>
            <person name="Caruso L."/>
            <person name="Cedroni M."/>
            <person name="Cotton M."/>
            <person name="Davidson T."/>
            <person name="Desai A."/>
            <person name="Elliott G."/>
            <person name="Erb T."/>
            <person name="Fronick C."/>
            <person name="Gaige T."/>
            <person name="Haakenson W."/>
            <person name="Haglund K."/>
            <person name="Holmes A."/>
            <person name="Harkins R."/>
            <person name="Kim K."/>
            <person name="Kruchowski S.S."/>
            <person name="Strong C.M."/>
            <person name="Grewal N."/>
            <person name="Goyea E."/>
            <person name="Hou S."/>
            <person name="Levy A."/>
            <person name="Martinka S."/>
            <person name="Mead K."/>
            <person name="McLellan M.D."/>
            <person name="Meyer R."/>
            <person name="Randall-Maher J."/>
            <person name="Tomlinson C."/>
            <person name="Dauphin-Kohlberg S."/>
            <person name="Kozlowicz-Reilly A."/>
            <person name="Shah N."/>
            <person name="Swearengen-Shahid S."/>
            <person name="Snider J."/>
            <person name="Strong J.T."/>
            <person name="Thompson J."/>
            <person name="Yoakum M."/>
            <person name="Leonard S."/>
            <person name="Pearman C."/>
            <person name="Trani L."/>
            <person name="Radionenko M."/>
            <person name="Waligorski J.E."/>
            <person name="Wang C."/>
            <person name="Rock S.M."/>
            <person name="Tin-Wollam A.-M."/>
            <person name="Maupin R."/>
            <person name="Latreille P."/>
            <person name="Wendl M.C."/>
            <person name="Yang S.-P."/>
            <person name="Pohl C."/>
            <person name="Wallis J.W."/>
            <person name="Spieth J."/>
            <person name="Bieri T.A."/>
            <person name="Berkowicz N."/>
            <person name="Nelson J.O."/>
            <person name="Osborne J."/>
            <person name="Ding L."/>
            <person name="Meyer R."/>
            <person name="Sabo A."/>
            <person name="Shotland Y."/>
            <person name="Sinha P."/>
            <person name="Wohldmann P.E."/>
            <person name="Cook L.L."/>
            <person name="Hickenbotham M.T."/>
            <person name="Eldred J."/>
            <person name="Williams D."/>
            <person name="Jones T.A."/>
            <person name="She X."/>
            <person name="Ciccarelli F.D."/>
            <person name="Izaurralde E."/>
            <person name="Taylor J."/>
            <person name="Schmutz J."/>
            <person name="Myers R.M."/>
            <person name="Cox D.R."/>
            <person name="Huang X."/>
            <person name="McPherson J.D."/>
            <person name="Mardis E.R."/>
            <person name="Clifton S.W."/>
            <person name="Warren W.C."/>
            <person name="Chinwalla A.T."/>
            <person name="Eddy S.R."/>
            <person name="Marra M.A."/>
            <person name="Ovcharenko I."/>
            <person name="Furey T.S."/>
            <person name="Miller W."/>
            <person name="Eichler E.E."/>
            <person name="Bork P."/>
            <person name="Suyama M."/>
            <person name="Torrents D."/>
            <person name="Waterston R.H."/>
            <person name="Wilson R.K."/>
        </authorList>
    </citation>
    <scope>NUCLEOTIDE SEQUENCE [LARGE SCALE GENOMIC DNA]</scope>
</reference>
<reference key="3">
    <citation type="submission" date="2005-07" db="EMBL/GenBank/DDBJ databases">
        <authorList>
            <person name="Mural R.J."/>
            <person name="Istrail S."/>
            <person name="Sutton G.G."/>
            <person name="Florea L."/>
            <person name="Halpern A.L."/>
            <person name="Mobarry C.M."/>
            <person name="Lippert R."/>
            <person name="Walenz B."/>
            <person name="Shatkay H."/>
            <person name="Dew I."/>
            <person name="Miller J.R."/>
            <person name="Flanigan M.J."/>
            <person name="Edwards N.J."/>
            <person name="Bolanos R."/>
            <person name="Fasulo D."/>
            <person name="Halldorsson B.V."/>
            <person name="Hannenhalli S."/>
            <person name="Turner R."/>
            <person name="Yooseph S."/>
            <person name="Lu F."/>
            <person name="Nusskern D.R."/>
            <person name="Shue B.C."/>
            <person name="Zheng X.H."/>
            <person name="Zhong F."/>
            <person name="Delcher A.L."/>
            <person name="Huson D.H."/>
            <person name="Kravitz S.A."/>
            <person name="Mouchard L."/>
            <person name="Reinert K."/>
            <person name="Remington K.A."/>
            <person name="Clark A.G."/>
            <person name="Waterman M.S."/>
            <person name="Eichler E.E."/>
            <person name="Adams M.D."/>
            <person name="Hunkapiller M.W."/>
            <person name="Myers E.W."/>
            <person name="Venter J.C."/>
        </authorList>
    </citation>
    <scope>NUCLEOTIDE SEQUENCE [LARGE SCALE GENOMIC DNA]</scope>
</reference>
<reference key="4">
    <citation type="journal article" date="2004" name="Genome Res.">
        <title>The status, quality, and expansion of the NIH full-length cDNA project: the Mammalian Gene Collection (MGC).</title>
        <authorList>
            <consortium name="The MGC Project Team"/>
        </authorList>
    </citation>
    <scope>NUCLEOTIDE SEQUENCE [LARGE SCALE MRNA] (ISOFORM 1)</scope>
    <scope>VARIANT PHE-86</scope>
    <source>
        <tissue>Testis</tissue>
    </source>
</reference>
<organism>
    <name type="scientific">Homo sapiens</name>
    <name type="common">Human</name>
    <dbReference type="NCBI Taxonomy" id="9606"/>
    <lineage>
        <taxon>Eukaryota</taxon>
        <taxon>Metazoa</taxon>
        <taxon>Chordata</taxon>
        <taxon>Craniata</taxon>
        <taxon>Vertebrata</taxon>
        <taxon>Euteleostomi</taxon>
        <taxon>Mammalia</taxon>
        <taxon>Eutheria</taxon>
        <taxon>Euarchontoglires</taxon>
        <taxon>Primates</taxon>
        <taxon>Haplorrhini</taxon>
        <taxon>Catarrhini</taxon>
        <taxon>Hominidae</taxon>
        <taxon>Homo</taxon>
    </lineage>
</organism>
<keyword id="KW-0025">Alternative splicing</keyword>
<keyword id="KW-1267">Proteomics identification</keyword>
<keyword id="KW-1185">Reference proteome</keyword>
<keyword id="KW-0833">Ubl conjugation pathway</keyword>
<name>FBX36_HUMAN</name>
<comment type="function">
    <text evidence="1">Substrate-recognition component of the SCF (SKP1-CUL1-F-box protein)-type E3 ubiquitin ligase complex.</text>
</comment>
<comment type="subunit">
    <text evidence="1">Directly interacts with SKP1 and CUL1.</text>
</comment>
<comment type="alternative products">
    <event type="alternative splicing"/>
    <isoform>
        <id>Q8NEA4-1</id>
        <name>1</name>
        <sequence type="displayed"/>
    </isoform>
    <isoform>
        <id>Q8NEA4-3</id>
        <name>2</name>
        <sequence type="described" ref="VSP_054336"/>
    </isoform>
</comment>
<dbReference type="EMBL" id="AK123085">
    <property type="protein sequence ID" value="BAG53868.1"/>
    <property type="molecule type" value="mRNA"/>
</dbReference>
<dbReference type="EMBL" id="AK289655">
    <property type="protein sequence ID" value="BAF82344.1"/>
    <property type="molecule type" value="mRNA"/>
</dbReference>
<dbReference type="EMBL" id="AC009973">
    <property type="protein sequence ID" value="AAY14756.1"/>
    <property type="molecule type" value="Genomic_DNA"/>
</dbReference>
<dbReference type="EMBL" id="CH471063">
    <property type="protein sequence ID" value="EAW70909.1"/>
    <property type="molecule type" value="Genomic_DNA"/>
</dbReference>
<dbReference type="EMBL" id="CH471063">
    <property type="protein sequence ID" value="EAW70912.1"/>
    <property type="molecule type" value="Genomic_DNA"/>
</dbReference>
<dbReference type="EMBL" id="BC033935">
    <property type="protein sequence ID" value="AAH33935.1"/>
    <property type="molecule type" value="mRNA"/>
</dbReference>
<dbReference type="CCDS" id="CCDS2472.1">
    <molecule id="Q8NEA4-1"/>
</dbReference>
<dbReference type="RefSeq" id="NP_777559.3">
    <molecule id="Q8NEA4-1"/>
    <property type="nucleotide sequence ID" value="NM_174899.4"/>
</dbReference>
<dbReference type="SMR" id="Q8NEA4"/>
<dbReference type="BioGRID" id="126262">
    <property type="interactions" value="3"/>
</dbReference>
<dbReference type="ComplexPortal" id="CPX-7976">
    <property type="entry name" value="SCF E3 ubiquitin ligase complex, FBXO36 variant"/>
</dbReference>
<dbReference type="FunCoup" id="Q8NEA4">
    <property type="interactions" value="162"/>
</dbReference>
<dbReference type="IntAct" id="Q8NEA4">
    <property type="interactions" value="1"/>
</dbReference>
<dbReference type="STRING" id="9606.ENSP00000283946"/>
<dbReference type="PhosphoSitePlus" id="Q8NEA4"/>
<dbReference type="BioMuta" id="FBXO36"/>
<dbReference type="DMDM" id="212288605"/>
<dbReference type="MassIVE" id="Q8NEA4"/>
<dbReference type="PaxDb" id="9606-ENSP00000283946"/>
<dbReference type="PeptideAtlas" id="Q8NEA4"/>
<dbReference type="ProteomicsDB" id="3763"/>
<dbReference type="ProteomicsDB" id="73138">
    <molecule id="Q8NEA4-1"/>
</dbReference>
<dbReference type="Antibodypedia" id="34398">
    <property type="antibodies" value="114 antibodies from 20 providers"/>
</dbReference>
<dbReference type="DNASU" id="130888"/>
<dbReference type="Ensembl" id="ENST00000283946.8">
    <molecule id="Q8NEA4-1"/>
    <property type="protein sequence ID" value="ENSP00000283946.3"/>
    <property type="gene ID" value="ENSG00000153832.12"/>
</dbReference>
<dbReference type="Ensembl" id="ENST00000373652.7">
    <molecule id="Q8NEA4-3"/>
    <property type="protein sequence ID" value="ENSP00000362756.3"/>
    <property type="gene ID" value="ENSG00000153832.12"/>
</dbReference>
<dbReference type="GeneID" id="130888"/>
<dbReference type="KEGG" id="hsa:130888"/>
<dbReference type="MANE-Select" id="ENST00000283946.8">
    <property type="protein sequence ID" value="ENSP00000283946.3"/>
    <property type="RefSeq nucleotide sequence ID" value="NM_174899.5"/>
    <property type="RefSeq protein sequence ID" value="NP_777559.3"/>
</dbReference>
<dbReference type="UCSC" id="uc002vqa.4">
    <molecule id="Q8NEA4-1"/>
    <property type="organism name" value="human"/>
</dbReference>
<dbReference type="AGR" id="HGNC:27020"/>
<dbReference type="CTD" id="130888"/>
<dbReference type="DisGeNET" id="130888"/>
<dbReference type="GeneCards" id="FBXO36"/>
<dbReference type="HGNC" id="HGNC:27020">
    <property type="gene designation" value="FBXO36"/>
</dbReference>
<dbReference type="HPA" id="ENSG00000153832">
    <property type="expression patterns" value="Low tissue specificity"/>
</dbReference>
<dbReference type="MIM" id="609105">
    <property type="type" value="gene"/>
</dbReference>
<dbReference type="neXtProt" id="NX_Q8NEA4"/>
<dbReference type="OpenTargets" id="ENSG00000153832"/>
<dbReference type="PharmGKB" id="PA134918778"/>
<dbReference type="VEuPathDB" id="HostDB:ENSG00000153832"/>
<dbReference type="eggNOG" id="KOG1777">
    <property type="taxonomic scope" value="Eukaryota"/>
</dbReference>
<dbReference type="GeneTree" id="ENSGT00390000001015"/>
<dbReference type="InParanoid" id="Q8NEA4"/>
<dbReference type="OMA" id="CNSDELW"/>
<dbReference type="OrthoDB" id="3219396at2759"/>
<dbReference type="PAN-GO" id="Q8NEA4">
    <property type="GO annotations" value="0 GO annotations based on evolutionary models"/>
</dbReference>
<dbReference type="PhylomeDB" id="Q8NEA4"/>
<dbReference type="TreeFam" id="TF329337"/>
<dbReference type="PathwayCommons" id="Q8NEA4"/>
<dbReference type="BioGRID-ORCS" id="130888">
    <property type="hits" value="12 hits in 1185 CRISPR screens"/>
</dbReference>
<dbReference type="ChiTaRS" id="FBXO36">
    <property type="organism name" value="human"/>
</dbReference>
<dbReference type="GenomeRNAi" id="130888"/>
<dbReference type="Pharos" id="Q8NEA4">
    <property type="development level" value="Tdark"/>
</dbReference>
<dbReference type="PRO" id="PR:Q8NEA4"/>
<dbReference type="Proteomes" id="UP000005640">
    <property type="component" value="Chromosome 2"/>
</dbReference>
<dbReference type="RNAct" id="Q8NEA4">
    <property type="molecule type" value="protein"/>
</dbReference>
<dbReference type="Bgee" id="ENSG00000153832">
    <property type="expression patterns" value="Expressed in sperm and 105 other cell types or tissues"/>
</dbReference>
<dbReference type="ExpressionAtlas" id="Q8NEA4">
    <property type="expression patterns" value="baseline and differential"/>
</dbReference>
<dbReference type="CDD" id="cd22106">
    <property type="entry name" value="F-box_FBXO36"/>
    <property type="match status" value="1"/>
</dbReference>
<dbReference type="Gene3D" id="1.20.1280.50">
    <property type="match status" value="1"/>
</dbReference>
<dbReference type="InterPro" id="IPR036047">
    <property type="entry name" value="F-box-like_dom_sf"/>
</dbReference>
<dbReference type="InterPro" id="IPR001810">
    <property type="entry name" value="F-box_dom"/>
</dbReference>
<dbReference type="InterPro" id="IPR052301">
    <property type="entry name" value="SCF_F-box/WD-repeat"/>
</dbReference>
<dbReference type="PANTHER" id="PTHR14381">
    <property type="entry name" value="DACTYLIN"/>
    <property type="match status" value="1"/>
</dbReference>
<dbReference type="PANTHER" id="PTHR14381:SF1">
    <property type="entry name" value="F-BOX_WD REPEAT-CONTAINING PROTEIN 4"/>
    <property type="match status" value="1"/>
</dbReference>
<dbReference type="Pfam" id="PF12937">
    <property type="entry name" value="F-box-like"/>
    <property type="match status" value="1"/>
</dbReference>
<dbReference type="SMART" id="SM00256">
    <property type="entry name" value="FBOX"/>
    <property type="match status" value="1"/>
</dbReference>
<dbReference type="SUPFAM" id="SSF81383">
    <property type="entry name" value="F-box domain"/>
    <property type="match status" value="1"/>
</dbReference>
<dbReference type="PROSITE" id="PS50181">
    <property type="entry name" value="FBOX"/>
    <property type="match status" value="1"/>
</dbReference>